<organism>
    <name type="scientific">Shigella dysenteriae serotype 1 (strain Sd197)</name>
    <dbReference type="NCBI Taxonomy" id="300267"/>
    <lineage>
        <taxon>Bacteria</taxon>
        <taxon>Pseudomonadati</taxon>
        <taxon>Pseudomonadota</taxon>
        <taxon>Gammaproteobacteria</taxon>
        <taxon>Enterobacterales</taxon>
        <taxon>Enterobacteriaceae</taxon>
        <taxon>Shigella</taxon>
    </lineage>
</organism>
<comment type="cofactor">
    <cofactor evidence="1">
        <name>Mg(2+)</name>
        <dbReference type="ChEBI" id="CHEBI:18420"/>
    </cofactor>
</comment>
<comment type="subunit">
    <text evidence="1">Monomer.</text>
</comment>
<comment type="similarity">
    <text evidence="3">Belongs to the Nudix hydrolase family. NudJ subfamily.</text>
</comment>
<accession>Q32EZ2</accession>
<keyword id="KW-0378">Hydrolase</keyword>
<keyword id="KW-0460">Magnesium</keyword>
<keyword id="KW-1185">Reference proteome</keyword>
<proteinExistence type="inferred from homology"/>
<name>NUDJ_SHIDS</name>
<evidence type="ECO:0000250" key="1"/>
<evidence type="ECO:0000255" key="2">
    <source>
        <dbReference type="PROSITE-ProRule" id="PRU00794"/>
    </source>
</evidence>
<evidence type="ECO:0000305" key="3"/>
<reference key="1">
    <citation type="journal article" date="2005" name="Nucleic Acids Res.">
        <title>Genome dynamics and diversity of Shigella species, the etiologic agents of bacillary dysentery.</title>
        <authorList>
            <person name="Yang F."/>
            <person name="Yang J."/>
            <person name="Zhang X."/>
            <person name="Chen L."/>
            <person name="Jiang Y."/>
            <person name="Yan Y."/>
            <person name="Tang X."/>
            <person name="Wang J."/>
            <person name="Xiong Z."/>
            <person name="Dong J."/>
            <person name="Xue Y."/>
            <person name="Zhu Y."/>
            <person name="Xu X."/>
            <person name="Sun L."/>
            <person name="Chen S."/>
            <person name="Nie H."/>
            <person name="Peng J."/>
            <person name="Xu J."/>
            <person name="Wang Y."/>
            <person name="Yuan Z."/>
            <person name="Wen Y."/>
            <person name="Yao Z."/>
            <person name="Shen Y."/>
            <person name="Qiang B."/>
            <person name="Hou Y."/>
            <person name="Yu J."/>
            <person name="Jin Q."/>
        </authorList>
    </citation>
    <scope>NUCLEOTIDE SEQUENCE [LARGE SCALE GENOMIC DNA]</scope>
    <source>
        <strain>Sd197</strain>
    </source>
</reference>
<dbReference type="EC" id="3.6.1.-"/>
<dbReference type="EMBL" id="CP000034">
    <property type="protein sequence ID" value="ABB62113.1"/>
    <property type="molecule type" value="Genomic_DNA"/>
</dbReference>
<dbReference type="RefSeq" id="WP_000476093.1">
    <property type="nucleotide sequence ID" value="NC_007606.1"/>
</dbReference>
<dbReference type="RefSeq" id="YP_403604.1">
    <property type="nucleotide sequence ID" value="NC_007606.1"/>
</dbReference>
<dbReference type="SMR" id="Q32EZ2"/>
<dbReference type="STRING" id="300267.SDY_2018"/>
<dbReference type="EnsemblBacteria" id="ABB62113">
    <property type="protein sequence ID" value="ABB62113"/>
    <property type="gene ID" value="SDY_2018"/>
</dbReference>
<dbReference type="GeneID" id="75203720"/>
<dbReference type="KEGG" id="sdy:SDY_2018"/>
<dbReference type="PATRIC" id="fig|300267.13.peg.2431"/>
<dbReference type="HOGENOM" id="CLU_037162_6_1_6"/>
<dbReference type="Proteomes" id="UP000002716">
    <property type="component" value="Chromosome"/>
</dbReference>
<dbReference type="GO" id="GO:0017110">
    <property type="term" value="F:nucleoside diphosphate phosphatase activity"/>
    <property type="evidence" value="ECO:0007669"/>
    <property type="project" value="InterPro"/>
</dbReference>
<dbReference type="GO" id="GO:0017111">
    <property type="term" value="F:ribonucleoside triphosphate phosphatase activity"/>
    <property type="evidence" value="ECO:0007669"/>
    <property type="project" value="InterPro"/>
</dbReference>
<dbReference type="GO" id="GO:0004787">
    <property type="term" value="F:thiamine diphosphate phosphatase activity"/>
    <property type="evidence" value="ECO:0007669"/>
    <property type="project" value="InterPro"/>
</dbReference>
<dbReference type="CDD" id="cd03675">
    <property type="entry name" value="NUDIX_Hydrolase"/>
    <property type="match status" value="1"/>
</dbReference>
<dbReference type="FunFam" id="3.90.79.10:FF:000017">
    <property type="entry name" value="Phosphatase NudJ"/>
    <property type="match status" value="1"/>
</dbReference>
<dbReference type="Gene3D" id="3.90.79.10">
    <property type="entry name" value="Nucleoside Triphosphate Pyrophosphohydrolase"/>
    <property type="match status" value="1"/>
</dbReference>
<dbReference type="InterPro" id="IPR020476">
    <property type="entry name" value="Nudix_hydrolase"/>
</dbReference>
<dbReference type="InterPro" id="IPR015797">
    <property type="entry name" value="NUDIX_hydrolase-like_dom_sf"/>
</dbReference>
<dbReference type="InterPro" id="IPR020084">
    <property type="entry name" value="NUDIX_hydrolase_CS"/>
</dbReference>
<dbReference type="InterPro" id="IPR000086">
    <property type="entry name" value="NUDIX_hydrolase_dom"/>
</dbReference>
<dbReference type="InterPro" id="IPR033713">
    <property type="entry name" value="NudJ"/>
</dbReference>
<dbReference type="PANTHER" id="PTHR43222">
    <property type="entry name" value="NUDIX HYDROLASE 23"/>
    <property type="match status" value="1"/>
</dbReference>
<dbReference type="PANTHER" id="PTHR43222:SF11">
    <property type="entry name" value="PHOSPHATASE NUDJ"/>
    <property type="match status" value="1"/>
</dbReference>
<dbReference type="Pfam" id="PF00293">
    <property type="entry name" value="NUDIX"/>
    <property type="match status" value="1"/>
</dbReference>
<dbReference type="PRINTS" id="PR00502">
    <property type="entry name" value="NUDIXFAMILY"/>
</dbReference>
<dbReference type="SUPFAM" id="SSF55811">
    <property type="entry name" value="Nudix"/>
    <property type="match status" value="1"/>
</dbReference>
<dbReference type="PROSITE" id="PS51462">
    <property type="entry name" value="NUDIX"/>
    <property type="match status" value="1"/>
</dbReference>
<dbReference type="PROSITE" id="PS00893">
    <property type="entry name" value="NUDIX_BOX"/>
    <property type="match status" value="1"/>
</dbReference>
<sequence length="153" mass="17433">MFKPHVTVACVVHAEGKFLVVEETINGKALWNQPAGHLEADETLVEAAARELWEETGISAQPQHFIRMHQWIAPDKTPFLRFLFAIELEQICPTQPHDSDIDCCRWVSAEEILQASNLRSPLVAESIRCYQSGQRYPLEMIGDFNWPFTKGVI</sequence>
<gene>
    <name type="primary">nudJ</name>
    <name type="ordered locus">SDY_2018</name>
</gene>
<protein>
    <recommendedName>
        <fullName>Phosphatase NudJ</fullName>
        <ecNumber>3.6.1.-</ecNumber>
    </recommendedName>
</protein>
<feature type="chain" id="PRO_0000342646" description="Phosphatase NudJ">
    <location>
        <begin position="1"/>
        <end position="153"/>
    </location>
</feature>
<feature type="domain" description="Nudix hydrolase" evidence="2">
    <location>
        <begin position="3"/>
        <end position="131"/>
    </location>
</feature>
<feature type="short sequence motif" description="Nudix box">
    <location>
        <begin position="36"/>
        <end position="57"/>
    </location>
</feature>